<feature type="chain" id="PRO_1000074623" description="Cysteine--tRNA ligase">
    <location>
        <begin position="1"/>
        <end position="476"/>
    </location>
</feature>
<feature type="short sequence motif" description="'HIGH' region">
    <location>
        <begin position="29"/>
        <end position="39"/>
    </location>
</feature>
<feature type="short sequence motif" description="'KMSKS' region">
    <location>
        <begin position="271"/>
        <end position="275"/>
    </location>
</feature>
<feature type="binding site" evidence="1">
    <location>
        <position position="27"/>
    </location>
    <ligand>
        <name>Zn(2+)</name>
        <dbReference type="ChEBI" id="CHEBI:29105"/>
    </ligand>
</feature>
<feature type="binding site" evidence="1">
    <location>
        <position position="213"/>
    </location>
    <ligand>
        <name>Zn(2+)</name>
        <dbReference type="ChEBI" id="CHEBI:29105"/>
    </ligand>
</feature>
<feature type="binding site" evidence="1">
    <location>
        <position position="238"/>
    </location>
    <ligand>
        <name>Zn(2+)</name>
        <dbReference type="ChEBI" id="CHEBI:29105"/>
    </ligand>
</feature>
<feature type="binding site" evidence="1">
    <location>
        <position position="242"/>
    </location>
    <ligand>
        <name>Zn(2+)</name>
        <dbReference type="ChEBI" id="CHEBI:29105"/>
    </ligand>
</feature>
<feature type="binding site" evidence="1">
    <location>
        <position position="274"/>
    </location>
    <ligand>
        <name>ATP</name>
        <dbReference type="ChEBI" id="CHEBI:30616"/>
    </ligand>
</feature>
<sequence length="476" mass="55177">MRIYNTATRQLEEFVTYTPRLARGYVCGITPYDSVHVGHGRVYVFFDMFRRYLEAQGYEVRLVINFTDIDDKIINRAREEFGAEAYKRWREVPERYIAEFFEMSKRLFIKPAYAYPKVTENVEDMVSWIKALVEKGYAYTAPDGSVYFEVGKVPNYGVLSRQRIEELMAGARVEPEPGKRNPLDFALWKSWTPGEPWWESPWCPGRPGWHLECVVMSTKHLGVPFDFHGGGADLIFPHHENEIAIAKAYFGVDNFARYWIHVGYLTVRGEKMSKSLGNVVTLREALSKYSGEALRLAYAMSHYRKPMEFSYEVLDQAEEMAKTIYTAYDELGQAVGDAGEEDKEALDYGRYVEEFYAALEDDFSTPQAAQQFYGLARYIISTVLHKIDKISRNTALSILSQYVKMADILGVLERREVPKEVEEAVKAAVEVRAKLRKERQYQLADYIRERLAGIGVELHDFGQRTYYTYRRGNRLR</sequence>
<reference key="1">
    <citation type="submission" date="2007-04" db="EMBL/GenBank/DDBJ databases">
        <title>Complete sequence of Pyrobaculum arsenaticum DSM 13514.</title>
        <authorList>
            <consortium name="US DOE Joint Genome Institute"/>
            <person name="Copeland A."/>
            <person name="Lucas S."/>
            <person name="Lapidus A."/>
            <person name="Barry K."/>
            <person name="Glavina del Rio T."/>
            <person name="Dalin E."/>
            <person name="Tice H."/>
            <person name="Pitluck S."/>
            <person name="Chain P."/>
            <person name="Malfatti S."/>
            <person name="Shin M."/>
            <person name="Vergez L."/>
            <person name="Schmutz J."/>
            <person name="Larimer F."/>
            <person name="Land M."/>
            <person name="Hauser L."/>
            <person name="Kyrpides N."/>
            <person name="Mikhailova N."/>
            <person name="Cozen A.E."/>
            <person name="Fitz-Gibbon S.T."/>
            <person name="House C.H."/>
            <person name="Saltikov C."/>
            <person name="Lowe T.M."/>
            <person name="Richardson P."/>
        </authorList>
    </citation>
    <scope>NUCLEOTIDE SEQUENCE [LARGE SCALE GENOMIC DNA]</scope>
    <source>
        <strain>ATCC 700994 / DSM 13514 / JCM 11321 / PZ6</strain>
    </source>
</reference>
<organism>
    <name type="scientific">Pyrobaculum arsenaticum (strain DSM 13514 / JCM 11321 / PZ6)</name>
    <dbReference type="NCBI Taxonomy" id="340102"/>
    <lineage>
        <taxon>Archaea</taxon>
        <taxon>Thermoproteota</taxon>
        <taxon>Thermoprotei</taxon>
        <taxon>Thermoproteales</taxon>
        <taxon>Thermoproteaceae</taxon>
        <taxon>Pyrobaculum</taxon>
    </lineage>
</organism>
<name>SYC_PYRAR</name>
<evidence type="ECO:0000255" key="1">
    <source>
        <dbReference type="HAMAP-Rule" id="MF_00041"/>
    </source>
</evidence>
<dbReference type="EC" id="6.1.1.16" evidence="1"/>
<dbReference type="EMBL" id="CP000660">
    <property type="protein sequence ID" value="ABP49682.1"/>
    <property type="molecule type" value="Genomic_DNA"/>
</dbReference>
<dbReference type="RefSeq" id="WP_011899590.1">
    <property type="nucleotide sequence ID" value="NC_009376.1"/>
</dbReference>
<dbReference type="SMR" id="A4WH15"/>
<dbReference type="STRING" id="340102.Pars_0065"/>
<dbReference type="GeneID" id="5054543"/>
<dbReference type="KEGG" id="pas:Pars_0065"/>
<dbReference type="HOGENOM" id="CLU_013528_0_1_2"/>
<dbReference type="OrthoDB" id="9445at2157"/>
<dbReference type="PhylomeDB" id="A4WH15"/>
<dbReference type="Proteomes" id="UP000001567">
    <property type="component" value="Chromosome"/>
</dbReference>
<dbReference type="GO" id="GO:0005737">
    <property type="term" value="C:cytoplasm"/>
    <property type="evidence" value="ECO:0007669"/>
    <property type="project" value="UniProtKB-SubCell"/>
</dbReference>
<dbReference type="GO" id="GO:0005524">
    <property type="term" value="F:ATP binding"/>
    <property type="evidence" value="ECO:0007669"/>
    <property type="project" value="UniProtKB-UniRule"/>
</dbReference>
<dbReference type="GO" id="GO:0004817">
    <property type="term" value="F:cysteine-tRNA ligase activity"/>
    <property type="evidence" value="ECO:0007669"/>
    <property type="project" value="UniProtKB-UniRule"/>
</dbReference>
<dbReference type="GO" id="GO:0008270">
    <property type="term" value="F:zinc ion binding"/>
    <property type="evidence" value="ECO:0007669"/>
    <property type="project" value="UniProtKB-UniRule"/>
</dbReference>
<dbReference type="GO" id="GO:0006423">
    <property type="term" value="P:cysteinyl-tRNA aminoacylation"/>
    <property type="evidence" value="ECO:0007669"/>
    <property type="project" value="UniProtKB-UniRule"/>
</dbReference>
<dbReference type="CDD" id="cd00672">
    <property type="entry name" value="CysRS_core"/>
    <property type="match status" value="1"/>
</dbReference>
<dbReference type="FunFam" id="3.40.50.620:FF:000130">
    <property type="entry name" value="Cysteine--tRNA ligase"/>
    <property type="match status" value="1"/>
</dbReference>
<dbReference type="Gene3D" id="1.20.120.1910">
    <property type="entry name" value="Cysteine-tRNA ligase, C-terminal anti-codon recognition domain"/>
    <property type="match status" value="1"/>
</dbReference>
<dbReference type="Gene3D" id="3.40.50.620">
    <property type="entry name" value="HUPs"/>
    <property type="match status" value="1"/>
</dbReference>
<dbReference type="HAMAP" id="MF_00041">
    <property type="entry name" value="Cys_tRNA_synth"/>
    <property type="match status" value="1"/>
</dbReference>
<dbReference type="InterPro" id="IPR015803">
    <property type="entry name" value="Cys-tRNA-ligase"/>
</dbReference>
<dbReference type="InterPro" id="IPR015273">
    <property type="entry name" value="Cys-tRNA-synt_Ia_DALR"/>
</dbReference>
<dbReference type="InterPro" id="IPR024909">
    <property type="entry name" value="Cys-tRNA/MSH_ligase"/>
</dbReference>
<dbReference type="InterPro" id="IPR014729">
    <property type="entry name" value="Rossmann-like_a/b/a_fold"/>
</dbReference>
<dbReference type="InterPro" id="IPR032678">
    <property type="entry name" value="tRNA-synt_1_cat_dom"/>
</dbReference>
<dbReference type="InterPro" id="IPR009080">
    <property type="entry name" value="tRNAsynth_Ia_anticodon-bd"/>
</dbReference>
<dbReference type="NCBIfam" id="TIGR00435">
    <property type="entry name" value="cysS"/>
    <property type="match status" value="1"/>
</dbReference>
<dbReference type="PANTHER" id="PTHR10890:SF3">
    <property type="entry name" value="CYSTEINE--TRNA LIGASE, CYTOPLASMIC"/>
    <property type="match status" value="1"/>
</dbReference>
<dbReference type="PANTHER" id="PTHR10890">
    <property type="entry name" value="CYSTEINYL-TRNA SYNTHETASE"/>
    <property type="match status" value="1"/>
</dbReference>
<dbReference type="Pfam" id="PF09190">
    <property type="entry name" value="DALR_2"/>
    <property type="match status" value="1"/>
</dbReference>
<dbReference type="Pfam" id="PF01406">
    <property type="entry name" value="tRNA-synt_1e"/>
    <property type="match status" value="1"/>
</dbReference>
<dbReference type="PRINTS" id="PR00983">
    <property type="entry name" value="TRNASYNTHCYS"/>
</dbReference>
<dbReference type="SMART" id="SM00840">
    <property type="entry name" value="DALR_2"/>
    <property type="match status" value="1"/>
</dbReference>
<dbReference type="SUPFAM" id="SSF47323">
    <property type="entry name" value="Anticodon-binding domain of a subclass of class I aminoacyl-tRNA synthetases"/>
    <property type="match status" value="1"/>
</dbReference>
<dbReference type="SUPFAM" id="SSF52374">
    <property type="entry name" value="Nucleotidylyl transferase"/>
    <property type="match status" value="1"/>
</dbReference>
<keyword id="KW-0030">Aminoacyl-tRNA synthetase</keyword>
<keyword id="KW-0067">ATP-binding</keyword>
<keyword id="KW-0963">Cytoplasm</keyword>
<keyword id="KW-0436">Ligase</keyword>
<keyword id="KW-0479">Metal-binding</keyword>
<keyword id="KW-0547">Nucleotide-binding</keyword>
<keyword id="KW-0648">Protein biosynthesis</keyword>
<keyword id="KW-0862">Zinc</keyword>
<gene>
    <name evidence="1" type="primary">cysS</name>
    <name type="ordered locus">Pars_0065</name>
</gene>
<protein>
    <recommendedName>
        <fullName evidence="1">Cysteine--tRNA ligase</fullName>
        <ecNumber evidence="1">6.1.1.16</ecNumber>
    </recommendedName>
    <alternativeName>
        <fullName evidence="1">Cysteinyl-tRNA synthetase</fullName>
        <shortName evidence="1">CysRS</shortName>
    </alternativeName>
</protein>
<proteinExistence type="inferred from homology"/>
<accession>A4WH15</accession>
<comment type="catalytic activity">
    <reaction evidence="1">
        <text>tRNA(Cys) + L-cysteine + ATP = L-cysteinyl-tRNA(Cys) + AMP + diphosphate</text>
        <dbReference type="Rhea" id="RHEA:17773"/>
        <dbReference type="Rhea" id="RHEA-COMP:9661"/>
        <dbReference type="Rhea" id="RHEA-COMP:9679"/>
        <dbReference type="ChEBI" id="CHEBI:30616"/>
        <dbReference type="ChEBI" id="CHEBI:33019"/>
        <dbReference type="ChEBI" id="CHEBI:35235"/>
        <dbReference type="ChEBI" id="CHEBI:78442"/>
        <dbReference type="ChEBI" id="CHEBI:78517"/>
        <dbReference type="ChEBI" id="CHEBI:456215"/>
        <dbReference type="EC" id="6.1.1.16"/>
    </reaction>
</comment>
<comment type="cofactor">
    <cofactor evidence="1">
        <name>Zn(2+)</name>
        <dbReference type="ChEBI" id="CHEBI:29105"/>
    </cofactor>
    <text evidence="1">Binds 1 zinc ion per subunit.</text>
</comment>
<comment type="subcellular location">
    <subcellularLocation>
        <location evidence="1">Cytoplasm</location>
    </subcellularLocation>
</comment>
<comment type="similarity">
    <text evidence="1">Belongs to the class-I aminoacyl-tRNA synthetase family.</text>
</comment>